<accession>Q3A2G6</accession>
<keyword id="KW-0131">Cell cycle</keyword>
<keyword id="KW-0132">Cell division</keyword>
<keyword id="KW-0997">Cell inner membrane</keyword>
<keyword id="KW-1003">Cell membrane</keyword>
<keyword id="KW-0133">Cell shape</keyword>
<keyword id="KW-0961">Cell wall biogenesis/degradation</keyword>
<keyword id="KW-0328">Glycosyltransferase</keyword>
<keyword id="KW-0472">Membrane</keyword>
<keyword id="KW-0573">Peptidoglycan synthesis</keyword>
<keyword id="KW-1185">Reference proteome</keyword>
<keyword id="KW-0808">Transferase</keyword>
<dbReference type="EC" id="2.4.1.227" evidence="1"/>
<dbReference type="EMBL" id="CP000142">
    <property type="protein sequence ID" value="ABA89441.1"/>
    <property type="molecule type" value="Genomic_DNA"/>
</dbReference>
<dbReference type="RefSeq" id="WP_011341956.1">
    <property type="nucleotide sequence ID" value="NC_007498.2"/>
</dbReference>
<dbReference type="SMR" id="Q3A2G6"/>
<dbReference type="STRING" id="338963.Pcar_2202"/>
<dbReference type="CAZy" id="GT28">
    <property type="family name" value="Glycosyltransferase Family 28"/>
</dbReference>
<dbReference type="KEGG" id="pca:Pcar_2202"/>
<dbReference type="eggNOG" id="COG0707">
    <property type="taxonomic scope" value="Bacteria"/>
</dbReference>
<dbReference type="HOGENOM" id="CLU_037404_0_1_7"/>
<dbReference type="OrthoDB" id="9808936at2"/>
<dbReference type="UniPathway" id="UPA00219"/>
<dbReference type="Proteomes" id="UP000002534">
    <property type="component" value="Chromosome"/>
</dbReference>
<dbReference type="GO" id="GO:0005886">
    <property type="term" value="C:plasma membrane"/>
    <property type="evidence" value="ECO:0007669"/>
    <property type="project" value="UniProtKB-SubCell"/>
</dbReference>
<dbReference type="GO" id="GO:0051991">
    <property type="term" value="F:UDP-N-acetyl-D-glucosamine:N-acetylmuramoyl-L-alanyl-D-glutamyl-meso-2,6-diaminopimelyl-D-alanyl-D-alanine-diphosphoundecaprenol 4-beta-N-acetylglucosaminlytransferase activity"/>
    <property type="evidence" value="ECO:0007669"/>
    <property type="project" value="RHEA"/>
</dbReference>
<dbReference type="GO" id="GO:0050511">
    <property type="term" value="F:undecaprenyldiphospho-muramoylpentapeptide beta-N-acetylglucosaminyltransferase activity"/>
    <property type="evidence" value="ECO:0007669"/>
    <property type="project" value="UniProtKB-UniRule"/>
</dbReference>
<dbReference type="GO" id="GO:0005975">
    <property type="term" value="P:carbohydrate metabolic process"/>
    <property type="evidence" value="ECO:0007669"/>
    <property type="project" value="InterPro"/>
</dbReference>
<dbReference type="GO" id="GO:0051301">
    <property type="term" value="P:cell division"/>
    <property type="evidence" value="ECO:0007669"/>
    <property type="project" value="UniProtKB-KW"/>
</dbReference>
<dbReference type="GO" id="GO:0071555">
    <property type="term" value="P:cell wall organization"/>
    <property type="evidence" value="ECO:0007669"/>
    <property type="project" value="UniProtKB-KW"/>
</dbReference>
<dbReference type="GO" id="GO:0030259">
    <property type="term" value="P:lipid glycosylation"/>
    <property type="evidence" value="ECO:0007669"/>
    <property type="project" value="UniProtKB-UniRule"/>
</dbReference>
<dbReference type="GO" id="GO:0009252">
    <property type="term" value="P:peptidoglycan biosynthetic process"/>
    <property type="evidence" value="ECO:0007669"/>
    <property type="project" value="UniProtKB-UniRule"/>
</dbReference>
<dbReference type="GO" id="GO:0008360">
    <property type="term" value="P:regulation of cell shape"/>
    <property type="evidence" value="ECO:0007669"/>
    <property type="project" value="UniProtKB-KW"/>
</dbReference>
<dbReference type="CDD" id="cd03785">
    <property type="entry name" value="GT28_MurG"/>
    <property type="match status" value="1"/>
</dbReference>
<dbReference type="Gene3D" id="3.40.50.2000">
    <property type="entry name" value="Glycogen Phosphorylase B"/>
    <property type="match status" value="2"/>
</dbReference>
<dbReference type="HAMAP" id="MF_00033">
    <property type="entry name" value="MurG"/>
    <property type="match status" value="1"/>
</dbReference>
<dbReference type="InterPro" id="IPR006009">
    <property type="entry name" value="GlcNAc_MurG"/>
</dbReference>
<dbReference type="InterPro" id="IPR007235">
    <property type="entry name" value="Glyco_trans_28_C"/>
</dbReference>
<dbReference type="InterPro" id="IPR004276">
    <property type="entry name" value="GlycoTrans_28_N"/>
</dbReference>
<dbReference type="NCBIfam" id="TIGR01133">
    <property type="entry name" value="murG"/>
    <property type="match status" value="1"/>
</dbReference>
<dbReference type="PANTHER" id="PTHR21015:SF22">
    <property type="entry name" value="GLYCOSYLTRANSFERASE"/>
    <property type="match status" value="1"/>
</dbReference>
<dbReference type="PANTHER" id="PTHR21015">
    <property type="entry name" value="UDP-N-ACETYLGLUCOSAMINE--N-ACETYLMURAMYL-(PENTAPEPTIDE) PYROPHOSPHORYL-UNDECAPRENOL N-ACETYLGLUCOSAMINE TRANSFERASE 1"/>
    <property type="match status" value="1"/>
</dbReference>
<dbReference type="Pfam" id="PF04101">
    <property type="entry name" value="Glyco_tran_28_C"/>
    <property type="match status" value="1"/>
</dbReference>
<dbReference type="Pfam" id="PF03033">
    <property type="entry name" value="Glyco_transf_28"/>
    <property type="match status" value="1"/>
</dbReference>
<dbReference type="SUPFAM" id="SSF53756">
    <property type="entry name" value="UDP-Glycosyltransferase/glycogen phosphorylase"/>
    <property type="match status" value="1"/>
</dbReference>
<proteinExistence type="inferred from homology"/>
<name>MURG_SYNC1</name>
<protein>
    <recommendedName>
        <fullName evidence="1">UDP-N-acetylglucosamine--N-acetylmuramyl-(pentapeptide) pyrophosphoryl-undecaprenol N-acetylglucosamine transferase</fullName>
        <ecNumber evidence="1">2.4.1.227</ecNumber>
    </recommendedName>
    <alternativeName>
        <fullName evidence="1">Undecaprenyl-PP-MurNAc-pentapeptide-UDPGlcNAc GlcNAc transferase</fullName>
    </alternativeName>
</protein>
<evidence type="ECO:0000255" key="1">
    <source>
        <dbReference type="HAMAP-Rule" id="MF_00033"/>
    </source>
</evidence>
<reference key="1">
    <citation type="submission" date="2005-10" db="EMBL/GenBank/DDBJ databases">
        <title>Complete sequence of Pelobacter carbinolicus DSM 2380.</title>
        <authorList>
            <person name="Copeland A."/>
            <person name="Lucas S."/>
            <person name="Lapidus A."/>
            <person name="Barry K."/>
            <person name="Detter J.C."/>
            <person name="Glavina T."/>
            <person name="Hammon N."/>
            <person name="Israni S."/>
            <person name="Pitluck S."/>
            <person name="Chertkov O."/>
            <person name="Schmutz J."/>
            <person name="Larimer F."/>
            <person name="Land M."/>
            <person name="Kyrpides N."/>
            <person name="Ivanova N."/>
            <person name="Richardson P."/>
        </authorList>
    </citation>
    <scope>NUCLEOTIDE SEQUENCE [LARGE SCALE GENOMIC DNA]</scope>
    <source>
        <strain>DSM 2380 / NBRC 103641 / GraBd1</strain>
    </source>
</reference>
<organism>
    <name type="scientific">Syntrophotalea carbinolica (strain DSM 2380 / NBRC 103641 / GraBd1)</name>
    <name type="common">Pelobacter carbinolicus</name>
    <dbReference type="NCBI Taxonomy" id="338963"/>
    <lineage>
        <taxon>Bacteria</taxon>
        <taxon>Pseudomonadati</taxon>
        <taxon>Thermodesulfobacteriota</taxon>
        <taxon>Desulfuromonadia</taxon>
        <taxon>Desulfuromonadales</taxon>
        <taxon>Syntrophotaleaceae</taxon>
        <taxon>Syntrophotalea</taxon>
    </lineage>
</organism>
<feature type="chain" id="PRO_0000225074" description="UDP-N-acetylglucosamine--N-acetylmuramyl-(pentapeptide) pyrophosphoryl-undecaprenol N-acetylglucosamine transferase">
    <location>
        <begin position="1"/>
        <end position="358"/>
    </location>
</feature>
<feature type="binding site" evidence="1">
    <location>
        <begin position="10"/>
        <end position="12"/>
    </location>
    <ligand>
        <name>UDP-N-acetyl-alpha-D-glucosamine</name>
        <dbReference type="ChEBI" id="CHEBI:57705"/>
    </ligand>
</feature>
<feature type="binding site" evidence="1">
    <location>
        <position position="124"/>
    </location>
    <ligand>
        <name>UDP-N-acetyl-alpha-D-glucosamine</name>
        <dbReference type="ChEBI" id="CHEBI:57705"/>
    </ligand>
</feature>
<feature type="binding site" evidence="1">
    <location>
        <position position="165"/>
    </location>
    <ligand>
        <name>UDP-N-acetyl-alpha-D-glucosamine</name>
        <dbReference type="ChEBI" id="CHEBI:57705"/>
    </ligand>
</feature>
<feature type="binding site" evidence="1">
    <location>
        <position position="187"/>
    </location>
    <ligand>
        <name>UDP-N-acetyl-alpha-D-glucosamine</name>
        <dbReference type="ChEBI" id="CHEBI:57705"/>
    </ligand>
</feature>
<feature type="binding site" evidence="1">
    <location>
        <position position="243"/>
    </location>
    <ligand>
        <name>UDP-N-acetyl-alpha-D-glucosamine</name>
        <dbReference type="ChEBI" id="CHEBI:57705"/>
    </ligand>
</feature>
<feature type="binding site" evidence="1">
    <location>
        <position position="288"/>
    </location>
    <ligand>
        <name>UDP-N-acetyl-alpha-D-glucosamine</name>
        <dbReference type="ChEBI" id="CHEBI:57705"/>
    </ligand>
</feature>
<comment type="function">
    <text evidence="1">Cell wall formation. Catalyzes the transfer of a GlcNAc subunit on undecaprenyl-pyrophosphoryl-MurNAc-pentapeptide (lipid intermediate I) to form undecaprenyl-pyrophosphoryl-MurNAc-(pentapeptide)GlcNAc (lipid intermediate II).</text>
</comment>
<comment type="catalytic activity">
    <reaction evidence="1">
        <text>di-trans,octa-cis-undecaprenyl diphospho-N-acetyl-alpha-D-muramoyl-L-alanyl-D-glutamyl-meso-2,6-diaminopimeloyl-D-alanyl-D-alanine + UDP-N-acetyl-alpha-D-glucosamine = di-trans,octa-cis-undecaprenyl diphospho-[N-acetyl-alpha-D-glucosaminyl-(1-&gt;4)]-N-acetyl-alpha-D-muramoyl-L-alanyl-D-glutamyl-meso-2,6-diaminopimeloyl-D-alanyl-D-alanine + UDP + H(+)</text>
        <dbReference type="Rhea" id="RHEA:31227"/>
        <dbReference type="ChEBI" id="CHEBI:15378"/>
        <dbReference type="ChEBI" id="CHEBI:57705"/>
        <dbReference type="ChEBI" id="CHEBI:58223"/>
        <dbReference type="ChEBI" id="CHEBI:61387"/>
        <dbReference type="ChEBI" id="CHEBI:61388"/>
        <dbReference type="EC" id="2.4.1.227"/>
    </reaction>
</comment>
<comment type="pathway">
    <text evidence="1">Cell wall biogenesis; peptidoglycan biosynthesis.</text>
</comment>
<comment type="subcellular location">
    <subcellularLocation>
        <location evidence="1">Cell inner membrane</location>
        <topology evidence="1">Peripheral membrane protein</topology>
        <orientation evidence="1">Cytoplasmic side</orientation>
    </subcellularLocation>
</comment>
<comment type="similarity">
    <text evidence="1">Belongs to the glycosyltransferase 28 family. MurG subfamily.</text>
</comment>
<sequence>MKLLLAGGGTGGHLFPAVALAQRLLEQDSEAQVQFVGTARGIEARVLPEQGWPLELIDIRGFVNQGLLGKLRMIPCLIRSVWQGLCILRKFQPDVVLGVGGYASAPMLVAARLKRIPTVIHEQNAWPGLTNRLLGPWARCVCLSFSEAERAFHRAATIVTGNPLRKGMEGCPPMDGDAPELLVFGGSRGARAINDAMLEALPRLEPWKDRLRIVHQTGGDDLQRIREGYARAGWPQESVVPFIDDMAAAYARAHLVVCRAGATTLAELAACGRAAILIPYPHAAADHQTVNARAMAKKGAGLVLAQQNLTPETLASLITDLLENRPRLISMSAAAKSLGITGAADRILRVCRNVCGQD</sequence>
<gene>
    <name evidence="1" type="primary">murG</name>
    <name type="ordered locus">Pcar_2202</name>
</gene>